<dbReference type="EC" id="6.3.4.16" evidence="1"/>
<dbReference type="EC" id="6.3.5.5" evidence="1"/>
<dbReference type="EMBL" id="BA000017">
    <property type="protein sequence ID" value="BAB57365.1"/>
    <property type="molecule type" value="Genomic_DNA"/>
</dbReference>
<dbReference type="RefSeq" id="WP_001126259.1">
    <property type="nucleotide sequence ID" value="NC_002758.2"/>
</dbReference>
<dbReference type="SMR" id="P63739"/>
<dbReference type="KEGG" id="sav:SAV1203"/>
<dbReference type="HOGENOM" id="CLU_000513_1_2_9"/>
<dbReference type="PhylomeDB" id="P63739"/>
<dbReference type="UniPathway" id="UPA00068">
    <property type="reaction ID" value="UER00171"/>
</dbReference>
<dbReference type="UniPathway" id="UPA00070">
    <property type="reaction ID" value="UER00115"/>
</dbReference>
<dbReference type="Proteomes" id="UP000002481">
    <property type="component" value="Chromosome"/>
</dbReference>
<dbReference type="GO" id="GO:0005737">
    <property type="term" value="C:cytoplasm"/>
    <property type="evidence" value="ECO:0007669"/>
    <property type="project" value="TreeGrafter"/>
</dbReference>
<dbReference type="GO" id="GO:0005524">
    <property type="term" value="F:ATP binding"/>
    <property type="evidence" value="ECO:0007669"/>
    <property type="project" value="UniProtKB-UniRule"/>
</dbReference>
<dbReference type="GO" id="GO:0004087">
    <property type="term" value="F:carbamoyl-phosphate synthase (ammonia) activity"/>
    <property type="evidence" value="ECO:0007669"/>
    <property type="project" value="RHEA"/>
</dbReference>
<dbReference type="GO" id="GO:0004088">
    <property type="term" value="F:carbamoyl-phosphate synthase (glutamine-hydrolyzing) activity"/>
    <property type="evidence" value="ECO:0007669"/>
    <property type="project" value="UniProtKB-UniRule"/>
</dbReference>
<dbReference type="GO" id="GO:0046872">
    <property type="term" value="F:metal ion binding"/>
    <property type="evidence" value="ECO:0007669"/>
    <property type="project" value="UniProtKB-KW"/>
</dbReference>
<dbReference type="GO" id="GO:0044205">
    <property type="term" value="P:'de novo' UMP biosynthetic process"/>
    <property type="evidence" value="ECO:0007669"/>
    <property type="project" value="UniProtKB-UniRule"/>
</dbReference>
<dbReference type="GO" id="GO:0006541">
    <property type="term" value="P:glutamine metabolic process"/>
    <property type="evidence" value="ECO:0007669"/>
    <property type="project" value="TreeGrafter"/>
</dbReference>
<dbReference type="GO" id="GO:0006526">
    <property type="term" value="P:L-arginine biosynthetic process"/>
    <property type="evidence" value="ECO:0007669"/>
    <property type="project" value="UniProtKB-UniRule"/>
</dbReference>
<dbReference type="CDD" id="cd01424">
    <property type="entry name" value="MGS_CPS_II"/>
    <property type="match status" value="1"/>
</dbReference>
<dbReference type="FunFam" id="1.10.1030.10:FF:000002">
    <property type="entry name" value="Carbamoyl-phosphate synthase large chain"/>
    <property type="match status" value="1"/>
</dbReference>
<dbReference type="FunFam" id="3.30.1490.20:FF:000001">
    <property type="entry name" value="Carbamoyl-phosphate synthase large chain"/>
    <property type="match status" value="1"/>
</dbReference>
<dbReference type="FunFam" id="3.30.470.20:FF:000001">
    <property type="entry name" value="Carbamoyl-phosphate synthase large chain"/>
    <property type="match status" value="1"/>
</dbReference>
<dbReference type="FunFam" id="3.30.470.20:FF:000026">
    <property type="entry name" value="Carbamoyl-phosphate synthase large chain"/>
    <property type="match status" value="1"/>
</dbReference>
<dbReference type="FunFam" id="3.40.50.1380:FF:000011">
    <property type="entry name" value="Carbamoyl-phosphate synthase large chain"/>
    <property type="match status" value="1"/>
</dbReference>
<dbReference type="FunFam" id="3.40.50.20:FF:000001">
    <property type="entry name" value="Carbamoyl-phosphate synthase large chain"/>
    <property type="match status" value="2"/>
</dbReference>
<dbReference type="Gene3D" id="3.40.50.20">
    <property type="match status" value="2"/>
</dbReference>
<dbReference type="Gene3D" id="3.30.1490.20">
    <property type="entry name" value="ATP-grasp fold, A domain"/>
    <property type="match status" value="1"/>
</dbReference>
<dbReference type="Gene3D" id="3.30.470.20">
    <property type="entry name" value="ATP-grasp fold, B domain"/>
    <property type="match status" value="2"/>
</dbReference>
<dbReference type="Gene3D" id="1.10.1030.10">
    <property type="entry name" value="Carbamoyl-phosphate synthetase, large subunit oligomerisation domain"/>
    <property type="match status" value="1"/>
</dbReference>
<dbReference type="Gene3D" id="3.40.50.1380">
    <property type="entry name" value="Methylglyoxal synthase-like domain"/>
    <property type="match status" value="1"/>
</dbReference>
<dbReference type="HAMAP" id="MF_01210_A">
    <property type="entry name" value="CPSase_L_chain_A"/>
    <property type="match status" value="1"/>
</dbReference>
<dbReference type="HAMAP" id="MF_01210_B">
    <property type="entry name" value="CPSase_L_chain_B"/>
    <property type="match status" value="1"/>
</dbReference>
<dbReference type="InterPro" id="IPR011761">
    <property type="entry name" value="ATP-grasp"/>
</dbReference>
<dbReference type="InterPro" id="IPR013815">
    <property type="entry name" value="ATP_grasp_subdomain_1"/>
</dbReference>
<dbReference type="InterPro" id="IPR006275">
    <property type="entry name" value="CarbamoylP_synth_lsu"/>
</dbReference>
<dbReference type="InterPro" id="IPR005480">
    <property type="entry name" value="CarbamoylP_synth_lsu_oligo"/>
</dbReference>
<dbReference type="InterPro" id="IPR036897">
    <property type="entry name" value="CarbamoylP_synth_lsu_oligo_sf"/>
</dbReference>
<dbReference type="InterPro" id="IPR005479">
    <property type="entry name" value="CbamoylP_synth_lsu-like_ATP-bd"/>
</dbReference>
<dbReference type="InterPro" id="IPR005483">
    <property type="entry name" value="CbamoylP_synth_lsu_CPSase_dom"/>
</dbReference>
<dbReference type="InterPro" id="IPR011607">
    <property type="entry name" value="MGS-like_dom"/>
</dbReference>
<dbReference type="InterPro" id="IPR036914">
    <property type="entry name" value="MGS-like_dom_sf"/>
</dbReference>
<dbReference type="InterPro" id="IPR033937">
    <property type="entry name" value="MGS_CPS_CarB"/>
</dbReference>
<dbReference type="InterPro" id="IPR016185">
    <property type="entry name" value="PreATP-grasp_dom_sf"/>
</dbReference>
<dbReference type="NCBIfam" id="TIGR01369">
    <property type="entry name" value="CPSaseII_lrg"/>
    <property type="match status" value="1"/>
</dbReference>
<dbReference type="NCBIfam" id="NF003671">
    <property type="entry name" value="PRK05294.1"/>
    <property type="match status" value="1"/>
</dbReference>
<dbReference type="NCBIfam" id="NF009455">
    <property type="entry name" value="PRK12815.1"/>
    <property type="match status" value="1"/>
</dbReference>
<dbReference type="PANTHER" id="PTHR11405:SF53">
    <property type="entry name" value="CARBAMOYL-PHOSPHATE SYNTHASE [AMMONIA], MITOCHONDRIAL"/>
    <property type="match status" value="1"/>
</dbReference>
<dbReference type="PANTHER" id="PTHR11405">
    <property type="entry name" value="CARBAMOYLTRANSFERASE FAMILY MEMBER"/>
    <property type="match status" value="1"/>
</dbReference>
<dbReference type="Pfam" id="PF02786">
    <property type="entry name" value="CPSase_L_D2"/>
    <property type="match status" value="2"/>
</dbReference>
<dbReference type="Pfam" id="PF02787">
    <property type="entry name" value="CPSase_L_D3"/>
    <property type="match status" value="1"/>
</dbReference>
<dbReference type="Pfam" id="PF02142">
    <property type="entry name" value="MGS"/>
    <property type="match status" value="1"/>
</dbReference>
<dbReference type="PRINTS" id="PR00098">
    <property type="entry name" value="CPSASE"/>
</dbReference>
<dbReference type="SMART" id="SM01096">
    <property type="entry name" value="CPSase_L_D3"/>
    <property type="match status" value="1"/>
</dbReference>
<dbReference type="SMART" id="SM01209">
    <property type="entry name" value="GARS_A"/>
    <property type="match status" value="1"/>
</dbReference>
<dbReference type="SMART" id="SM00851">
    <property type="entry name" value="MGS"/>
    <property type="match status" value="1"/>
</dbReference>
<dbReference type="SUPFAM" id="SSF48108">
    <property type="entry name" value="Carbamoyl phosphate synthetase, large subunit connection domain"/>
    <property type="match status" value="1"/>
</dbReference>
<dbReference type="SUPFAM" id="SSF56059">
    <property type="entry name" value="Glutathione synthetase ATP-binding domain-like"/>
    <property type="match status" value="2"/>
</dbReference>
<dbReference type="SUPFAM" id="SSF52335">
    <property type="entry name" value="Methylglyoxal synthase-like"/>
    <property type="match status" value="1"/>
</dbReference>
<dbReference type="SUPFAM" id="SSF52440">
    <property type="entry name" value="PreATP-grasp domain"/>
    <property type="match status" value="2"/>
</dbReference>
<dbReference type="PROSITE" id="PS50975">
    <property type="entry name" value="ATP_GRASP"/>
    <property type="match status" value="2"/>
</dbReference>
<dbReference type="PROSITE" id="PS00866">
    <property type="entry name" value="CPSASE_1"/>
    <property type="match status" value="2"/>
</dbReference>
<dbReference type="PROSITE" id="PS00867">
    <property type="entry name" value="CPSASE_2"/>
    <property type="match status" value="2"/>
</dbReference>
<dbReference type="PROSITE" id="PS51855">
    <property type="entry name" value="MGS"/>
    <property type="match status" value="1"/>
</dbReference>
<feature type="chain" id="PRO_0000145038" description="Carbamoyl phosphate synthase large chain">
    <location>
        <begin position="1"/>
        <end position="1057"/>
    </location>
</feature>
<feature type="domain" description="ATP-grasp 1" evidence="1">
    <location>
        <begin position="133"/>
        <end position="327"/>
    </location>
</feature>
<feature type="domain" description="ATP-grasp 2" evidence="1">
    <location>
        <begin position="671"/>
        <end position="861"/>
    </location>
</feature>
<feature type="domain" description="MGS-like" evidence="1">
    <location>
        <begin position="930"/>
        <end position="1057"/>
    </location>
</feature>
<feature type="region of interest" description="Carboxyphosphate synthetic domain" evidence="1">
    <location>
        <begin position="1"/>
        <end position="401"/>
    </location>
</feature>
<feature type="region of interest" description="Oligomerization domain" evidence="1">
    <location>
        <begin position="402"/>
        <end position="546"/>
    </location>
</feature>
<feature type="region of interest" description="Carbamoyl phosphate synthetic domain" evidence="1">
    <location>
        <begin position="547"/>
        <end position="929"/>
    </location>
</feature>
<feature type="region of interest" description="Allosteric domain" evidence="1">
    <location>
        <begin position="930"/>
        <end position="1057"/>
    </location>
</feature>
<feature type="binding site" evidence="1">
    <location>
        <position position="129"/>
    </location>
    <ligand>
        <name>ATP</name>
        <dbReference type="ChEBI" id="CHEBI:30616"/>
        <label>1</label>
    </ligand>
</feature>
<feature type="binding site" evidence="1">
    <location>
        <position position="169"/>
    </location>
    <ligand>
        <name>ATP</name>
        <dbReference type="ChEBI" id="CHEBI:30616"/>
        <label>1</label>
    </ligand>
</feature>
<feature type="binding site" evidence="1">
    <location>
        <position position="175"/>
    </location>
    <ligand>
        <name>ATP</name>
        <dbReference type="ChEBI" id="CHEBI:30616"/>
        <label>1</label>
    </ligand>
</feature>
<feature type="binding site" evidence="1">
    <location>
        <position position="176"/>
    </location>
    <ligand>
        <name>ATP</name>
        <dbReference type="ChEBI" id="CHEBI:30616"/>
        <label>1</label>
    </ligand>
</feature>
<feature type="binding site" evidence="1">
    <location>
        <position position="208"/>
    </location>
    <ligand>
        <name>ATP</name>
        <dbReference type="ChEBI" id="CHEBI:30616"/>
        <label>1</label>
    </ligand>
</feature>
<feature type="binding site" evidence="1">
    <location>
        <position position="210"/>
    </location>
    <ligand>
        <name>ATP</name>
        <dbReference type="ChEBI" id="CHEBI:30616"/>
        <label>1</label>
    </ligand>
</feature>
<feature type="binding site" evidence="1">
    <location>
        <position position="215"/>
    </location>
    <ligand>
        <name>ATP</name>
        <dbReference type="ChEBI" id="CHEBI:30616"/>
        <label>1</label>
    </ligand>
</feature>
<feature type="binding site" evidence="1">
    <location>
        <position position="241"/>
    </location>
    <ligand>
        <name>ATP</name>
        <dbReference type="ChEBI" id="CHEBI:30616"/>
        <label>1</label>
    </ligand>
</feature>
<feature type="binding site" evidence="1">
    <location>
        <position position="242"/>
    </location>
    <ligand>
        <name>ATP</name>
        <dbReference type="ChEBI" id="CHEBI:30616"/>
        <label>1</label>
    </ligand>
</feature>
<feature type="binding site" evidence="1">
    <location>
        <position position="243"/>
    </location>
    <ligand>
        <name>ATP</name>
        <dbReference type="ChEBI" id="CHEBI:30616"/>
        <label>1</label>
    </ligand>
</feature>
<feature type="binding site" evidence="1">
    <location>
        <position position="284"/>
    </location>
    <ligand>
        <name>ATP</name>
        <dbReference type="ChEBI" id="CHEBI:30616"/>
        <label>1</label>
    </ligand>
</feature>
<feature type="binding site" evidence="1">
    <location>
        <position position="284"/>
    </location>
    <ligand>
        <name>Mg(2+)</name>
        <dbReference type="ChEBI" id="CHEBI:18420"/>
        <label>1</label>
    </ligand>
</feature>
<feature type="binding site" evidence="1">
    <location>
        <position position="284"/>
    </location>
    <ligand>
        <name>Mn(2+)</name>
        <dbReference type="ChEBI" id="CHEBI:29035"/>
        <label>1</label>
    </ligand>
</feature>
<feature type="binding site" evidence="1">
    <location>
        <position position="298"/>
    </location>
    <ligand>
        <name>ATP</name>
        <dbReference type="ChEBI" id="CHEBI:30616"/>
        <label>1</label>
    </ligand>
</feature>
<feature type="binding site" evidence="1">
    <location>
        <position position="298"/>
    </location>
    <ligand>
        <name>Mg(2+)</name>
        <dbReference type="ChEBI" id="CHEBI:18420"/>
        <label>1</label>
    </ligand>
</feature>
<feature type="binding site" evidence="1">
    <location>
        <position position="298"/>
    </location>
    <ligand>
        <name>Mg(2+)</name>
        <dbReference type="ChEBI" id="CHEBI:18420"/>
        <label>2</label>
    </ligand>
</feature>
<feature type="binding site" evidence="1">
    <location>
        <position position="298"/>
    </location>
    <ligand>
        <name>Mn(2+)</name>
        <dbReference type="ChEBI" id="CHEBI:29035"/>
        <label>1</label>
    </ligand>
</feature>
<feature type="binding site" evidence="1">
    <location>
        <position position="298"/>
    </location>
    <ligand>
        <name>Mn(2+)</name>
        <dbReference type="ChEBI" id="CHEBI:29035"/>
        <label>2</label>
    </ligand>
</feature>
<feature type="binding site" evidence="1">
    <location>
        <position position="300"/>
    </location>
    <ligand>
        <name>Mg(2+)</name>
        <dbReference type="ChEBI" id="CHEBI:18420"/>
        <label>2</label>
    </ligand>
</feature>
<feature type="binding site" evidence="1">
    <location>
        <position position="300"/>
    </location>
    <ligand>
        <name>Mn(2+)</name>
        <dbReference type="ChEBI" id="CHEBI:29035"/>
        <label>2</label>
    </ligand>
</feature>
<feature type="binding site" evidence="1">
    <location>
        <position position="707"/>
    </location>
    <ligand>
        <name>ATP</name>
        <dbReference type="ChEBI" id="CHEBI:30616"/>
        <label>2</label>
    </ligand>
</feature>
<feature type="binding site" evidence="1">
    <location>
        <position position="746"/>
    </location>
    <ligand>
        <name>ATP</name>
        <dbReference type="ChEBI" id="CHEBI:30616"/>
        <label>2</label>
    </ligand>
</feature>
<feature type="binding site" evidence="1">
    <location>
        <position position="748"/>
    </location>
    <ligand>
        <name>ATP</name>
        <dbReference type="ChEBI" id="CHEBI:30616"/>
        <label>2</label>
    </ligand>
</feature>
<feature type="binding site" evidence="1">
    <location>
        <position position="752"/>
    </location>
    <ligand>
        <name>ATP</name>
        <dbReference type="ChEBI" id="CHEBI:30616"/>
        <label>2</label>
    </ligand>
</feature>
<feature type="binding site" evidence="1">
    <location>
        <position position="777"/>
    </location>
    <ligand>
        <name>ATP</name>
        <dbReference type="ChEBI" id="CHEBI:30616"/>
        <label>2</label>
    </ligand>
</feature>
<feature type="binding site" evidence="1">
    <location>
        <position position="778"/>
    </location>
    <ligand>
        <name>ATP</name>
        <dbReference type="ChEBI" id="CHEBI:30616"/>
        <label>2</label>
    </ligand>
</feature>
<feature type="binding site" evidence="1">
    <location>
        <position position="779"/>
    </location>
    <ligand>
        <name>ATP</name>
        <dbReference type="ChEBI" id="CHEBI:30616"/>
        <label>2</label>
    </ligand>
</feature>
<feature type="binding site" evidence="1">
    <location>
        <position position="780"/>
    </location>
    <ligand>
        <name>ATP</name>
        <dbReference type="ChEBI" id="CHEBI:30616"/>
        <label>2</label>
    </ligand>
</feature>
<feature type="binding site" evidence="1">
    <location>
        <position position="820"/>
    </location>
    <ligand>
        <name>ATP</name>
        <dbReference type="ChEBI" id="CHEBI:30616"/>
        <label>2</label>
    </ligand>
</feature>
<feature type="binding site" evidence="1">
    <location>
        <position position="820"/>
    </location>
    <ligand>
        <name>Mg(2+)</name>
        <dbReference type="ChEBI" id="CHEBI:18420"/>
        <label>3</label>
    </ligand>
</feature>
<feature type="binding site" evidence="1">
    <location>
        <position position="820"/>
    </location>
    <ligand>
        <name>Mn(2+)</name>
        <dbReference type="ChEBI" id="CHEBI:29035"/>
        <label>3</label>
    </ligand>
</feature>
<feature type="binding site" evidence="1">
    <location>
        <position position="832"/>
    </location>
    <ligand>
        <name>ATP</name>
        <dbReference type="ChEBI" id="CHEBI:30616"/>
        <label>2</label>
    </ligand>
</feature>
<feature type="binding site" evidence="1">
    <location>
        <position position="832"/>
    </location>
    <ligand>
        <name>Mg(2+)</name>
        <dbReference type="ChEBI" id="CHEBI:18420"/>
        <label>3</label>
    </ligand>
</feature>
<feature type="binding site" evidence="1">
    <location>
        <position position="832"/>
    </location>
    <ligand>
        <name>Mg(2+)</name>
        <dbReference type="ChEBI" id="CHEBI:18420"/>
        <label>4</label>
    </ligand>
</feature>
<feature type="binding site" evidence="1">
    <location>
        <position position="832"/>
    </location>
    <ligand>
        <name>Mn(2+)</name>
        <dbReference type="ChEBI" id="CHEBI:29035"/>
        <label>3</label>
    </ligand>
</feature>
<feature type="binding site" evidence="1">
    <location>
        <position position="832"/>
    </location>
    <ligand>
        <name>Mn(2+)</name>
        <dbReference type="ChEBI" id="CHEBI:29035"/>
        <label>4</label>
    </ligand>
</feature>
<feature type="binding site" evidence="1">
    <location>
        <position position="834"/>
    </location>
    <ligand>
        <name>Mg(2+)</name>
        <dbReference type="ChEBI" id="CHEBI:18420"/>
        <label>4</label>
    </ligand>
</feature>
<feature type="binding site" evidence="1">
    <location>
        <position position="834"/>
    </location>
    <ligand>
        <name>Mn(2+)</name>
        <dbReference type="ChEBI" id="CHEBI:29035"/>
        <label>4</label>
    </ligand>
</feature>
<proteinExistence type="inferred from homology"/>
<accession>P63739</accession>
<accession>Q99UR5</accession>
<reference key="1">
    <citation type="journal article" date="2001" name="Lancet">
        <title>Whole genome sequencing of meticillin-resistant Staphylococcus aureus.</title>
        <authorList>
            <person name="Kuroda M."/>
            <person name="Ohta T."/>
            <person name="Uchiyama I."/>
            <person name="Baba T."/>
            <person name="Yuzawa H."/>
            <person name="Kobayashi I."/>
            <person name="Cui L."/>
            <person name="Oguchi A."/>
            <person name="Aoki K."/>
            <person name="Nagai Y."/>
            <person name="Lian J.-Q."/>
            <person name="Ito T."/>
            <person name="Kanamori M."/>
            <person name="Matsumaru H."/>
            <person name="Maruyama A."/>
            <person name="Murakami H."/>
            <person name="Hosoyama A."/>
            <person name="Mizutani-Ui Y."/>
            <person name="Takahashi N.K."/>
            <person name="Sawano T."/>
            <person name="Inoue R."/>
            <person name="Kaito C."/>
            <person name="Sekimizu K."/>
            <person name="Hirakawa H."/>
            <person name="Kuhara S."/>
            <person name="Goto S."/>
            <person name="Yabuzaki J."/>
            <person name="Kanehisa M."/>
            <person name="Yamashita A."/>
            <person name="Oshima K."/>
            <person name="Furuya K."/>
            <person name="Yoshino C."/>
            <person name="Shiba T."/>
            <person name="Hattori M."/>
            <person name="Ogasawara N."/>
            <person name="Hayashi H."/>
            <person name="Hiramatsu K."/>
        </authorList>
    </citation>
    <scope>NUCLEOTIDE SEQUENCE [LARGE SCALE GENOMIC DNA]</scope>
    <source>
        <strain>Mu50 / ATCC 700699</strain>
    </source>
</reference>
<comment type="function">
    <text evidence="1">Large subunit of the glutamine-dependent carbamoyl phosphate synthetase (CPSase). CPSase catalyzes the formation of carbamoyl phosphate from the ammonia moiety of glutamine, carbonate, and phosphate donated by ATP, constituting the first step of 2 biosynthetic pathways, one leading to arginine and/or urea and the other to pyrimidine nucleotides. The large subunit (synthetase) binds the substrates ammonia (free or transferred from glutamine from the small subunit), hydrogencarbonate and ATP and carries out an ATP-coupled ligase reaction, activating hydrogencarbonate by forming carboxy phosphate which reacts with ammonia to form carbamoyl phosphate.</text>
</comment>
<comment type="catalytic activity">
    <reaction evidence="1">
        <text>hydrogencarbonate + L-glutamine + 2 ATP + H2O = carbamoyl phosphate + L-glutamate + 2 ADP + phosphate + 2 H(+)</text>
        <dbReference type="Rhea" id="RHEA:18633"/>
        <dbReference type="ChEBI" id="CHEBI:15377"/>
        <dbReference type="ChEBI" id="CHEBI:15378"/>
        <dbReference type="ChEBI" id="CHEBI:17544"/>
        <dbReference type="ChEBI" id="CHEBI:29985"/>
        <dbReference type="ChEBI" id="CHEBI:30616"/>
        <dbReference type="ChEBI" id="CHEBI:43474"/>
        <dbReference type="ChEBI" id="CHEBI:58228"/>
        <dbReference type="ChEBI" id="CHEBI:58359"/>
        <dbReference type="ChEBI" id="CHEBI:456216"/>
        <dbReference type="EC" id="6.3.5.5"/>
    </reaction>
</comment>
<comment type="catalytic activity">
    <molecule>Carbamoyl phosphate synthase large chain</molecule>
    <reaction evidence="1">
        <text>hydrogencarbonate + NH4(+) + 2 ATP = carbamoyl phosphate + 2 ADP + phosphate + 2 H(+)</text>
        <dbReference type="Rhea" id="RHEA:18029"/>
        <dbReference type="ChEBI" id="CHEBI:15378"/>
        <dbReference type="ChEBI" id="CHEBI:17544"/>
        <dbReference type="ChEBI" id="CHEBI:28938"/>
        <dbReference type="ChEBI" id="CHEBI:30616"/>
        <dbReference type="ChEBI" id="CHEBI:43474"/>
        <dbReference type="ChEBI" id="CHEBI:58228"/>
        <dbReference type="ChEBI" id="CHEBI:456216"/>
        <dbReference type="EC" id="6.3.4.16"/>
    </reaction>
</comment>
<comment type="cofactor">
    <cofactor evidence="1">
        <name>Mg(2+)</name>
        <dbReference type="ChEBI" id="CHEBI:18420"/>
    </cofactor>
    <cofactor evidence="1">
        <name>Mn(2+)</name>
        <dbReference type="ChEBI" id="CHEBI:29035"/>
    </cofactor>
    <text evidence="1">Binds 4 Mg(2+) or Mn(2+) ions per subunit.</text>
</comment>
<comment type="pathway">
    <text evidence="1">Amino-acid biosynthesis; L-arginine biosynthesis; carbamoyl phosphate from bicarbonate: step 1/1.</text>
</comment>
<comment type="pathway">
    <text evidence="1">Pyrimidine metabolism; UMP biosynthesis via de novo pathway; (S)-dihydroorotate from bicarbonate: step 1/3.</text>
</comment>
<comment type="subunit">
    <text evidence="1">Composed of two chains; the small (or glutamine) chain promotes the hydrolysis of glutamine to ammonia, which is used by the large (or ammonia) chain to synthesize carbamoyl phosphate. Tetramer of heterodimers (alpha,beta)4.</text>
</comment>
<comment type="domain">
    <text evidence="1">The large subunit is composed of 2 ATP-grasp domains that are involved in binding the 2 ATP molecules needed for carbamoyl phosphate synthesis. The N-terminal ATP-grasp domain (referred to as the carboxyphosphate synthetic component) catalyzes the ATP-dependent phosphorylation of hydrogencarbonate to carboxyphosphate and the subsequent nucleophilic attack by ammonia to form a carbamate intermediate. The C-terminal ATP-grasp domain (referred to as the carbamoyl phosphate synthetic component) then catalyzes the phosphorylation of carbamate with the second ATP to form the end product carbamoyl phosphate. The reactive and unstable enzyme intermediates are sequentially channeled from one active site to the next through the interior of the protein over a distance of at least 96 A.</text>
</comment>
<comment type="similarity">
    <text evidence="1">Belongs to the CarB family.</text>
</comment>
<sequence length="1057" mass="117172">MPKRNDIKTILVIGSGPIIIGQAAEFDYAGTQACLALKEEGYRVILVNSNPATIMTDKEIADKVYIEPLTHDFIARIIRKEQPDALLPTLGGQTGLNMAIQLHESGVLQDNNVQLLGTELTSIQQAEDREMFRTLMNDLNVPVPESDIVNTVEQAFKFKEQVGYPLIVRPAFTMGGTGGGICHNDEELHEIVSNGLHYSPATQCLLEKSIAGFKEIEYEVMRDKNDNAIVVCNMENIDPVGIHTGDSIVVAPSQTLSDVEYQMLRDVSLKVIRALGIEGGCNVQLALDPHSFDYYIIEVNPRVSRSSALASKATGYPIAKLAAKIAVGLTLDEMLNPITGTSYAAFEPTLDYVISKIPRFPFDKFEKGERELGTQMKATGEVMAIGRTYEESLLKAIRSLEYGVHHLGLPNGESFDLDYIKERISHQDDERLFFIGEAIRRGTTLEEIHNMTQIDYFFLHKFQNIIDIEHQLKEHQGDLEYLKYAKDYGFSDKTIAHRFNMTEEEVYQLRMENDIKPVYKMVDTCAAEFESSTPYYYGTYETENESIVTDKEKILVLGSGPIRIGQGVEFDYATVHAVWAIQKAGYEAIIVNNNPETVSTDFSISDKLYFEPLTEEDVMNIINLEKPKGVVVQFGGQTAINLADKLAKHGVKILGTSLENLNRAEDRKEFEALLRKINVPQPQGKSATSPEEALANAAEIGYPVVVRPSYVLGGRAMEIVDNDKELENYMTQAVKASPEHPVLVDRYLTGKEIEVDAICDGETVIIPGIMEHIERAGVHSGDSIAVYPPQTLTEDELATLEDYTIKLAKGLNIIGLINIQFVIAHDGVYVLEVNPRSSRTVPFLSKITDIPMAQLAMRAIIGEKLTDMGYQEGVQPYAEGVFVKAPVFSFNKLKNVDITLGPEMKSTGEVMGKDTTLEKALFKGLTGSGVEVKDHGTVLMTVSDKDKEEVVKLAQRLNEVGYKILATSGTANKLAEYDIPAEVVGKIGGENDLLTRIQNGDVQIVINTMTKGKEVERDGFQIRRTTVENGIPCLTSLDTANALTNVIESMTFTMRQM</sequence>
<protein>
    <recommendedName>
        <fullName evidence="1">Carbamoyl phosphate synthase large chain</fullName>
        <ecNumber evidence="1">6.3.4.16</ecNumber>
        <ecNumber evidence="1">6.3.5.5</ecNumber>
    </recommendedName>
    <alternativeName>
        <fullName evidence="1">Carbamoyl phosphate synthetase ammonia chain</fullName>
    </alternativeName>
</protein>
<keyword id="KW-0028">Amino-acid biosynthesis</keyword>
<keyword id="KW-0055">Arginine biosynthesis</keyword>
<keyword id="KW-0067">ATP-binding</keyword>
<keyword id="KW-0436">Ligase</keyword>
<keyword id="KW-0460">Magnesium</keyword>
<keyword id="KW-0464">Manganese</keyword>
<keyword id="KW-0479">Metal-binding</keyword>
<keyword id="KW-0547">Nucleotide-binding</keyword>
<keyword id="KW-0665">Pyrimidine biosynthesis</keyword>
<keyword id="KW-0677">Repeat</keyword>
<organism>
    <name type="scientific">Staphylococcus aureus (strain Mu50 / ATCC 700699)</name>
    <dbReference type="NCBI Taxonomy" id="158878"/>
    <lineage>
        <taxon>Bacteria</taxon>
        <taxon>Bacillati</taxon>
        <taxon>Bacillota</taxon>
        <taxon>Bacilli</taxon>
        <taxon>Bacillales</taxon>
        <taxon>Staphylococcaceae</taxon>
        <taxon>Staphylococcus</taxon>
    </lineage>
</organism>
<evidence type="ECO:0000255" key="1">
    <source>
        <dbReference type="HAMAP-Rule" id="MF_01210"/>
    </source>
</evidence>
<gene>
    <name evidence="1" type="primary">carB</name>
    <name type="synonym">pyrAB</name>
    <name type="ordered locus">SAV1203</name>
</gene>
<name>CARB_STAAM</name>